<accession>A0A0U5CJT8</accession>
<dbReference type="EC" id="1.-.-.-" evidence="4"/>
<dbReference type="EMBL" id="CDMC01000024">
    <property type="protein sequence ID" value="CEL11257.1"/>
    <property type="molecule type" value="Genomic_DNA"/>
</dbReference>
<dbReference type="STRING" id="454130.A0A0U5CJT8"/>
<dbReference type="OMA" id="PRFIANT"/>
<dbReference type="OrthoDB" id="1844152at2759"/>
<dbReference type="UniPathway" id="UPA00213"/>
<dbReference type="Proteomes" id="UP000054771">
    <property type="component" value="Unassembled WGS sequence"/>
</dbReference>
<dbReference type="GO" id="GO:0016020">
    <property type="term" value="C:membrane"/>
    <property type="evidence" value="ECO:0007669"/>
    <property type="project" value="UniProtKB-SubCell"/>
</dbReference>
<dbReference type="GO" id="GO:0020037">
    <property type="term" value="F:heme binding"/>
    <property type="evidence" value="ECO:0007669"/>
    <property type="project" value="InterPro"/>
</dbReference>
<dbReference type="GO" id="GO:0005506">
    <property type="term" value="F:iron ion binding"/>
    <property type="evidence" value="ECO:0007669"/>
    <property type="project" value="InterPro"/>
</dbReference>
<dbReference type="GO" id="GO:0004497">
    <property type="term" value="F:monooxygenase activity"/>
    <property type="evidence" value="ECO:0007669"/>
    <property type="project" value="UniProtKB-KW"/>
</dbReference>
<dbReference type="GO" id="GO:0016705">
    <property type="term" value="F:oxidoreductase activity, acting on paired donors, with incorporation or reduction of molecular oxygen"/>
    <property type="evidence" value="ECO:0007669"/>
    <property type="project" value="InterPro"/>
</dbReference>
<dbReference type="GO" id="GO:0019748">
    <property type="term" value="P:secondary metabolic process"/>
    <property type="evidence" value="ECO:0007669"/>
    <property type="project" value="UniProtKB-ARBA"/>
</dbReference>
<dbReference type="GO" id="GO:0016114">
    <property type="term" value="P:terpenoid biosynthetic process"/>
    <property type="evidence" value="ECO:0007669"/>
    <property type="project" value="UniProtKB-UniPathway"/>
</dbReference>
<dbReference type="CDD" id="cd11041">
    <property type="entry name" value="CYP503A1-like"/>
    <property type="match status" value="1"/>
</dbReference>
<dbReference type="Gene3D" id="1.10.630.10">
    <property type="entry name" value="Cytochrome P450"/>
    <property type="match status" value="1"/>
</dbReference>
<dbReference type="InterPro" id="IPR001128">
    <property type="entry name" value="Cyt_P450"/>
</dbReference>
<dbReference type="InterPro" id="IPR017972">
    <property type="entry name" value="Cyt_P450_CS"/>
</dbReference>
<dbReference type="InterPro" id="IPR002403">
    <property type="entry name" value="Cyt_P450_E_grp-IV"/>
</dbReference>
<dbReference type="InterPro" id="IPR036396">
    <property type="entry name" value="Cyt_P450_sf"/>
</dbReference>
<dbReference type="PANTHER" id="PTHR46206">
    <property type="entry name" value="CYTOCHROME P450"/>
    <property type="match status" value="1"/>
</dbReference>
<dbReference type="PANTHER" id="PTHR46206:SF2">
    <property type="entry name" value="CYTOCHROME P450 MONOOXYGENASE AUSG-RELATED"/>
    <property type="match status" value="1"/>
</dbReference>
<dbReference type="Pfam" id="PF00067">
    <property type="entry name" value="p450"/>
    <property type="match status" value="1"/>
</dbReference>
<dbReference type="PRINTS" id="PR00465">
    <property type="entry name" value="EP450IV"/>
</dbReference>
<dbReference type="SUPFAM" id="SSF48264">
    <property type="entry name" value="Cytochrome P450"/>
    <property type="match status" value="1"/>
</dbReference>
<dbReference type="PROSITE" id="PS00086">
    <property type="entry name" value="CYTOCHROME_P450"/>
    <property type="match status" value="1"/>
</dbReference>
<keyword id="KW-0349">Heme</keyword>
<keyword id="KW-0408">Iron</keyword>
<keyword id="KW-0472">Membrane</keyword>
<keyword id="KW-0479">Metal-binding</keyword>
<keyword id="KW-0503">Monooxygenase</keyword>
<keyword id="KW-0560">Oxidoreductase</keyword>
<keyword id="KW-1185">Reference proteome</keyword>
<keyword id="KW-0812">Transmembrane</keyword>
<keyword id="KW-1133">Transmembrane helix</keyword>
<feature type="chain" id="PRO_0000453842" description="Cytochrome P450 monooxygenase ausR">
    <location>
        <begin position="1"/>
        <end position="500"/>
    </location>
</feature>
<feature type="transmembrane region" description="Helical" evidence="3">
    <location>
        <begin position="15"/>
        <end position="35"/>
    </location>
</feature>
<feature type="binding site" description="axial binding residue" evidence="1">
    <location>
        <position position="439"/>
    </location>
    <ligand>
        <name>heme</name>
        <dbReference type="ChEBI" id="CHEBI:30413"/>
    </ligand>
    <ligandPart>
        <name>Fe</name>
        <dbReference type="ChEBI" id="CHEBI:18248"/>
    </ligandPart>
</feature>
<organism>
    <name type="scientific">Aspergillus calidoustus</name>
    <dbReference type="NCBI Taxonomy" id="454130"/>
    <lineage>
        <taxon>Eukaryota</taxon>
        <taxon>Fungi</taxon>
        <taxon>Dikarya</taxon>
        <taxon>Ascomycota</taxon>
        <taxon>Pezizomycotina</taxon>
        <taxon>Eurotiomycetes</taxon>
        <taxon>Eurotiomycetidae</taxon>
        <taxon>Eurotiales</taxon>
        <taxon>Aspergillaceae</taxon>
        <taxon>Aspergillus</taxon>
        <taxon>Aspergillus subgen. Nidulantes</taxon>
    </lineage>
</organism>
<comment type="function">
    <text evidence="2 4 5">Cytochrome P450 monooxygenase; part of the gene cluster that mediates the biosynthesis of calidodehydroaustin, a fungal meroterpenoid (PubMed:28233494, PubMed:29076725). The first step of the pathway is the synthesis of 3,5-dimethylorsellinic acid by the polyketide synthase ausA (PubMed:28233494). 3,5-dimethylorsellinic acid is then prenylated by the polyprenyl transferase ausN (PubMed:28233494). Further epoxidation by the FAD-dependent monooxygenase ausM and cyclization by the probable terpene cyclase ausL lead to the formation of protoaustinoid A (By similarity). Protoaustinoid A is then oxidized to spiro-lactone preaustinoid A3 by the combined action of the FAD-binding monooxygenases ausB and ausC, and the dioxygenase ausE (By similarity). Acid-catalyzed keto-rearrangement and ring contraction of the tetraketide portion of preaustinoid A3 by ausJ lead to the formation of preaustinoid A4 (By similarity). The aldo-keto reductase ausK, with the help of ausH, is involved in the next step by transforming preaustinoid A4 into isoaustinone which is in turn hydroxylated by the P450 monooxygenase ausI to form austinolide (By similarity). The cytochrome P450 monooxygenase ausG modifies austinolide to austinol (By similarity). Austinol is further acetylated to austin by the O-acetyltransferase ausP, which spontaneously changes to dehydroaustin (PubMed:28233494). The cytochrome P450 monooxygenase ausR then converts dehydroaustin is into 7-dehydrodehydroaustin (PubMed:28233494). The hydroxylation catalyzed by ausR permits the O-acetyltransferase ausQ to add an additional acetyl group to the molecule, leading to the formation of acetoxydehydroaustin (PubMed:28233494). The short chain dehydrogenase ausT catalyzes the reduction of the double bond present between carbon atoms 1 and 2 to convert 7-dehydrodehydroaustin into 1,2-dihydro-7-hydroxydehydroaustin (PubMed:28233494). AusQ catalyzes not only an acetylation reaction but also the addition of the PKS ausV diketide product to 1,2-dihydro-7-hydroxydehydroaustin, forming precalidodehydroaustin (PubMed:28233494). Finally, the iron/alpha-ketoglutarate-dependent dioxygenase converts precalidodehydroaustin into calidodehydroaustin (PubMed:28233494).</text>
</comment>
<comment type="cofactor">
    <cofactor evidence="1">
        <name>heme</name>
        <dbReference type="ChEBI" id="CHEBI:30413"/>
    </cofactor>
</comment>
<comment type="pathway">
    <text evidence="4">Secondary metabolite biosynthesis; terpenoid biosynthesis.</text>
</comment>
<comment type="subcellular location">
    <subcellularLocation>
        <location evidence="3">Membrane</location>
        <topology evidence="3">Single-pass membrane protein</topology>
    </subcellularLocation>
</comment>
<comment type="disruption phenotype">
    <text evidence="4">Eesults in loss of 7-hydroxydehydroaustin and accumulates a new product, 1,2-dihydro-dehydroaustin.</text>
</comment>
<comment type="miscellaneous">
    <text evidence="8">In A.calidoustus, the austinoid gene cluster lies on a contiguous DNA region, while clusters from E.nidulans and P.brasilianum are split in their respective genomes. Genetic rearrangements provoked variability among the clusters and E.nidulans produces the least number of austionoid derivatives with the end products austinol and dehydroaustinol, while P.brasilianum can produce until acetoxydehydroaustin, and A.calidoustus produces the highest number of identified derivatives.</text>
</comment>
<comment type="similarity">
    <text evidence="7">Belongs to the cytochrome P450 family.</text>
</comment>
<reference key="1">
    <citation type="journal article" date="2016" name="Genome Announc.">
        <title>Draft genome sequences of fungus Aspergillus calidoustus.</title>
        <authorList>
            <person name="Horn F."/>
            <person name="Linde J."/>
            <person name="Mattern D.J."/>
            <person name="Walther G."/>
            <person name="Guthke R."/>
            <person name="Scherlach K."/>
            <person name="Martin K."/>
            <person name="Brakhage A.A."/>
            <person name="Petzke L."/>
            <person name="Valiante V."/>
        </authorList>
    </citation>
    <scope>NUCLEOTIDE SEQUENCE [LARGE SCALE GENOMIC DNA]</scope>
    <source>
        <strain>SF006504</strain>
    </source>
</reference>
<reference key="2">
    <citation type="journal article" date="2017" name="ACS Chem. Biol.">
        <title>Discovery of an Extended Austinoid Biosynthetic Pathway in Aspergillus calidoustus.</title>
        <authorList>
            <person name="Valiante V."/>
            <person name="Mattern D.J."/>
            <person name="Schueffler A."/>
            <person name="Horn F."/>
            <person name="Walther G."/>
            <person name="Scherlach K."/>
            <person name="Petzke L."/>
            <person name="Dickhaut J."/>
            <person name="Guthke R."/>
            <person name="Hertweck C."/>
            <person name="Nett M."/>
            <person name="Thines E."/>
            <person name="Brakhage A.A."/>
        </authorList>
    </citation>
    <scope>FUNCTION</scope>
    <scope>CATALYTIC ACTIVITY</scope>
    <scope>DISRUPTION PHENOTYPE</scope>
    <scope>PATHWAY</scope>
</reference>
<reference key="3">
    <citation type="journal article" date="2017" name="ACS Chem. Biol.">
        <title>Rewiring of the austinoid biosynthetic pathway in filamentous fungi.</title>
        <authorList>
            <person name="Mattern D.J."/>
            <person name="Valiante V."/>
            <person name="Horn F."/>
            <person name="Petzke L."/>
            <person name="Brakhage A.A."/>
        </authorList>
    </citation>
    <scope>FUNCTION</scope>
</reference>
<sequence length="500" mass="56502">MLRLMHPFSAQPNEGVGLYILWTVAVLFVIFKLLAPAKCDLPTVNGRRRFEIGQYQARRRFALDGRGIILNGLRKARAFRVVSQKGPKIILGPEFADEVKSHPACNADVFIAKEFHAHVSGFEVLRPQQVMKDAIRLKLTRSIGVLMKPMSAETALILETQWGNSDCWHELDLKSTIASLVSRVSAVMFVGEELGRDQKWLSIVTNYSSDMFVADLDLCKWPEALRPIATYFLSSCGKLRRHIREAALMLDPILSERYSAPHNKHNFLDWFEEVAGGRKYNPVLAQLSLAAAAIDTTSDLIIQTLTDICRFRDSGKLQQDLREEMVRVLRADGWEKSAMYNLKLLDSVLKETQRVKPVVVFGMGRYVTEQMTLHDGTVIPQGETINVVNTRVWDSAVYPNPLEWDPYRFVRRRDSGDHAAHLVSPTPDHMGFGLGKHSCPGRFFAATKIKILLCHILLKYDVKISDEASSTVVSSGNFLFPDATLSFCVRRRQDNLTIWG</sequence>
<protein>
    <recommendedName>
        <fullName evidence="6">Cytochrome P450 monooxygenase ausR</fullName>
        <ecNumber evidence="4">1.-.-.-</ecNumber>
    </recommendedName>
    <alternativeName>
        <fullName evidence="6">Austinoid biosynthesis cluster protein R</fullName>
    </alternativeName>
</protein>
<name>AUSR_ASPCI</name>
<gene>
    <name evidence="6" type="primary">ausR</name>
    <name type="ORF">ASPCAL14360</name>
</gene>
<proteinExistence type="evidence at protein level"/>
<evidence type="ECO:0000250" key="1">
    <source>
        <dbReference type="UniProtKB" id="P04798"/>
    </source>
</evidence>
<evidence type="ECO:0000250" key="2">
    <source>
        <dbReference type="UniProtKB" id="Q5AR29"/>
    </source>
</evidence>
<evidence type="ECO:0000255" key="3"/>
<evidence type="ECO:0000269" key="4">
    <source>
    </source>
</evidence>
<evidence type="ECO:0000269" key="5">
    <source>
    </source>
</evidence>
<evidence type="ECO:0000303" key="6">
    <source>
    </source>
</evidence>
<evidence type="ECO:0000305" key="7"/>
<evidence type="ECO:0000305" key="8">
    <source>
    </source>
</evidence>